<accession>O60813</accession>
<accession>A0A087WW85</accession>
<accession>B7ZMC2</accession>
<keyword id="KW-0433">Leucine-rich repeat</keyword>
<keyword id="KW-1185">Reference proteome</keyword>
<keyword id="KW-0677">Repeat</keyword>
<gene>
    <name evidence="3" type="primary">PRAMEF11</name>
</gene>
<evidence type="ECO:0000250" key="1">
    <source>
        <dbReference type="UniProtKB" id="Q3UWY1"/>
    </source>
</evidence>
<evidence type="ECO:0000305" key="2"/>
<evidence type="ECO:0000312" key="3">
    <source>
        <dbReference type="HGNC" id="HGNC:14086"/>
    </source>
</evidence>
<protein>
    <recommendedName>
        <fullName evidence="3">PRAME family member 11</fullName>
    </recommendedName>
</protein>
<comment type="similarity">
    <text evidence="2">Belongs to the PRAME family.</text>
</comment>
<dbReference type="EMBL" id="AC245034">
    <property type="status" value="NOT_ANNOTATED_CDS"/>
    <property type="molecule type" value="Genomic_DNA"/>
</dbReference>
<dbReference type="EMBL" id="BC144426">
    <property type="protein sequence ID" value="AAI44427.1"/>
    <property type="molecule type" value="mRNA"/>
</dbReference>
<dbReference type="EMBL" id="AL049680">
    <property type="protein sequence ID" value="CAB41252.1"/>
    <property type="molecule type" value="mRNA"/>
</dbReference>
<dbReference type="CCDS" id="CCDS53268.2"/>
<dbReference type="RefSeq" id="NP_001139816.2">
    <property type="nucleotide sequence ID" value="NM_001146344.3"/>
</dbReference>
<dbReference type="RefSeq" id="XP_011539781.1">
    <property type="nucleotide sequence ID" value="XM_011541479.3"/>
</dbReference>
<dbReference type="RefSeq" id="XP_054187836.1">
    <property type="nucleotide sequence ID" value="XM_054331861.1"/>
</dbReference>
<dbReference type="SMR" id="O60813"/>
<dbReference type="FunCoup" id="O60813">
    <property type="interactions" value="20"/>
</dbReference>
<dbReference type="STRING" id="9606.ENSP00000480027"/>
<dbReference type="iPTMnet" id="O60813"/>
<dbReference type="PhosphoSitePlus" id="O60813"/>
<dbReference type="BioMuta" id="PRAMEF11"/>
<dbReference type="MassIVE" id="O60813"/>
<dbReference type="PaxDb" id="9606-ENSP00000480027"/>
<dbReference type="PeptideAtlas" id="O60813"/>
<dbReference type="Antibodypedia" id="73339">
    <property type="antibodies" value="59 antibodies from 10 providers"/>
</dbReference>
<dbReference type="DNASU" id="440560"/>
<dbReference type="Ensembl" id="ENST00000619922.1">
    <property type="protein sequence ID" value="ENSP00000480027.2"/>
    <property type="gene ID" value="ENSG00000239810.3"/>
</dbReference>
<dbReference type="Ensembl" id="ENST00000633392.1">
    <property type="protein sequence ID" value="ENSP00000488512.1"/>
    <property type="gene ID" value="ENSG00000281934.1"/>
</dbReference>
<dbReference type="GeneID" id="440560"/>
<dbReference type="KEGG" id="hsa:440560"/>
<dbReference type="MANE-Select" id="ENST00000619922.1">
    <property type="protein sequence ID" value="ENSP00000480027.2"/>
    <property type="RefSeq nucleotide sequence ID" value="NM_001146344.3"/>
    <property type="RefSeq protein sequence ID" value="NP_001139816.2"/>
</dbReference>
<dbReference type="UCSC" id="uc031tph.2">
    <property type="organism name" value="human"/>
</dbReference>
<dbReference type="AGR" id="HGNC:14086"/>
<dbReference type="CTD" id="440560"/>
<dbReference type="GeneCards" id="PRAMEF11"/>
<dbReference type="HGNC" id="HGNC:14086">
    <property type="gene designation" value="PRAMEF11"/>
</dbReference>
<dbReference type="HPA" id="ENSG00000239810">
    <property type="expression patterns" value="Not detected"/>
</dbReference>
<dbReference type="neXtProt" id="NX_O60813"/>
<dbReference type="OpenTargets" id="ENSG00000239810"/>
<dbReference type="PharmGKB" id="PA142671148"/>
<dbReference type="VEuPathDB" id="HostDB:ENSG00000239810"/>
<dbReference type="eggNOG" id="ENOG502QWSJ">
    <property type="taxonomic scope" value="Eukaryota"/>
</dbReference>
<dbReference type="GeneTree" id="ENSGT01030000234531"/>
<dbReference type="InParanoid" id="O60813"/>
<dbReference type="OMA" id="CYRTHET"/>
<dbReference type="OrthoDB" id="9533139at2759"/>
<dbReference type="PAN-GO" id="O60813">
    <property type="GO annotations" value="1 GO annotation based on evolutionary models"/>
</dbReference>
<dbReference type="TreeFam" id="TF332708"/>
<dbReference type="PathwayCommons" id="O60813"/>
<dbReference type="BioGRID-ORCS" id="440560">
    <property type="hits" value="58 hits in 1048 CRISPR screens"/>
</dbReference>
<dbReference type="GenomeRNAi" id="440560"/>
<dbReference type="Pharos" id="O60813">
    <property type="development level" value="Tdark"/>
</dbReference>
<dbReference type="PRO" id="PR:O60813"/>
<dbReference type="Proteomes" id="UP000005640">
    <property type="component" value="Chromosome 1"/>
</dbReference>
<dbReference type="RNAct" id="O60813">
    <property type="molecule type" value="protein"/>
</dbReference>
<dbReference type="Bgee" id="ENSG00000239810">
    <property type="expression patterns" value="Expressed in left testis and 1 other cell type or tissue"/>
</dbReference>
<dbReference type="GO" id="GO:0031462">
    <property type="term" value="C:Cul2-RING ubiquitin ligase complex"/>
    <property type="evidence" value="ECO:0000318"/>
    <property type="project" value="GO_Central"/>
</dbReference>
<dbReference type="GO" id="GO:0005737">
    <property type="term" value="C:cytoplasm"/>
    <property type="evidence" value="ECO:0000318"/>
    <property type="project" value="GO_Central"/>
</dbReference>
<dbReference type="GO" id="GO:1990756">
    <property type="term" value="F:ubiquitin-like ligase-substrate adaptor activity"/>
    <property type="evidence" value="ECO:0000318"/>
    <property type="project" value="GO_Central"/>
</dbReference>
<dbReference type="GO" id="GO:0043066">
    <property type="term" value="P:negative regulation of apoptotic process"/>
    <property type="evidence" value="ECO:0007669"/>
    <property type="project" value="InterPro"/>
</dbReference>
<dbReference type="GO" id="GO:0045596">
    <property type="term" value="P:negative regulation of cell differentiation"/>
    <property type="evidence" value="ECO:0007669"/>
    <property type="project" value="InterPro"/>
</dbReference>
<dbReference type="GO" id="GO:0045892">
    <property type="term" value="P:negative regulation of DNA-templated transcription"/>
    <property type="evidence" value="ECO:0007669"/>
    <property type="project" value="InterPro"/>
</dbReference>
<dbReference type="GO" id="GO:0008284">
    <property type="term" value="P:positive regulation of cell population proliferation"/>
    <property type="evidence" value="ECO:0007669"/>
    <property type="project" value="InterPro"/>
</dbReference>
<dbReference type="GO" id="GO:0043161">
    <property type="term" value="P:proteasome-mediated ubiquitin-dependent protein catabolic process"/>
    <property type="evidence" value="ECO:0000318"/>
    <property type="project" value="GO_Central"/>
</dbReference>
<dbReference type="FunFam" id="3.80.10.10:FF:000079">
    <property type="entry name" value="PRAME family member 18"/>
    <property type="match status" value="1"/>
</dbReference>
<dbReference type="Gene3D" id="3.80.10.10">
    <property type="entry name" value="Ribonuclease Inhibitor"/>
    <property type="match status" value="1"/>
</dbReference>
<dbReference type="InterPro" id="IPR032675">
    <property type="entry name" value="LRR_dom_sf"/>
</dbReference>
<dbReference type="InterPro" id="IPR026271">
    <property type="entry name" value="PRAME"/>
</dbReference>
<dbReference type="InterPro" id="IPR050694">
    <property type="entry name" value="PRAME_domain"/>
</dbReference>
<dbReference type="PANTHER" id="PTHR14224:SF19">
    <property type="entry name" value="PRAME FAMILY MEMBER 11-RELATED"/>
    <property type="match status" value="1"/>
</dbReference>
<dbReference type="PANTHER" id="PTHR14224">
    <property type="entry name" value="SIMILAR TO PREFERENTIALLY EXPRESSED ANTIGEN IN MELANOMA-LIKE 3"/>
    <property type="match status" value="1"/>
</dbReference>
<dbReference type="PIRSF" id="PIRSF038286">
    <property type="entry name" value="PRAME"/>
    <property type="match status" value="1"/>
</dbReference>
<dbReference type="SUPFAM" id="SSF52047">
    <property type="entry name" value="RNI-like"/>
    <property type="match status" value="1"/>
</dbReference>
<name>PRA11_HUMAN</name>
<reference key="1">
    <citation type="journal article" date="2006" name="Nature">
        <title>The DNA sequence and biological annotation of human chromosome 1.</title>
        <authorList>
            <person name="Gregory S.G."/>
            <person name="Barlow K.F."/>
            <person name="McLay K.E."/>
            <person name="Kaul R."/>
            <person name="Swarbreck D."/>
            <person name="Dunham A."/>
            <person name="Scott C.E."/>
            <person name="Howe K.L."/>
            <person name="Woodfine K."/>
            <person name="Spencer C.C.A."/>
            <person name="Jones M.C."/>
            <person name="Gillson C."/>
            <person name="Searle S."/>
            <person name="Zhou Y."/>
            <person name="Kokocinski F."/>
            <person name="McDonald L."/>
            <person name="Evans R."/>
            <person name="Phillips K."/>
            <person name="Atkinson A."/>
            <person name="Cooper R."/>
            <person name="Jones C."/>
            <person name="Hall R.E."/>
            <person name="Andrews T.D."/>
            <person name="Lloyd C."/>
            <person name="Ainscough R."/>
            <person name="Almeida J.P."/>
            <person name="Ambrose K.D."/>
            <person name="Anderson F."/>
            <person name="Andrew R.W."/>
            <person name="Ashwell R.I.S."/>
            <person name="Aubin K."/>
            <person name="Babbage A.K."/>
            <person name="Bagguley C.L."/>
            <person name="Bailey J."/>
            <person name="Beasley H."/>
            <person name="Bethel G."/>
            <person name="Bird C.P."/>
            <person name="Bray-Allen S."/>
            <person name="Brown J.Y."/>
            <person name="Brown A.J."/>
            <person name="Buckley D."/>
            <person name="Burton J."/>
            <person name="Bye J."/>
            <person name="Carder C."/>
            <person name="Chapman J.C."/>
            <person name="Clark S.Y."/>
            <person name="Clarke G."/>
            <person name="Clee C."/>
            <person name="Cobley V."/>
            <person name="Collier R.E."/>
            <person name="Corby N."/>
            <person name="Coville G.J."/>
            <person name="Davies J."/>
            <person name="Deadman R."/>
            <person name="Dunn M."/>
            <person name="Earthrowl M."/>
            <person name="Ellington A.G."/>
            <person name="Errington H."/>
            <person name="Frankish A."/>
            <person name="Frankland J."/>
            <person name="French L."/>
            <person name="Garner P."/>
            <person name="Garnett J."/>
            <person name="Gay L."/>
            <person name="Ghori M.R.J."/>
            <person name="Gibson R."/>
            <person name="Gilby L.M."/>
            <person name="Gillett W."/>
            <person name="Glithero R.J."/>
            <person name="Grafham D.V."/>
            <person name="Griffiths C."/>
            <person name="Griffiths-Jones S."/>
            <person name="Grocock R."/>
            <person name="Hammond S."/>
            <person name="Harrison E.S.I."/>
            <person name="Hart E."/>
            <person name="Haugen E."/>
            <person name="Heath P.D."/>
            <person name="Holmes S."/>
            <person name="Holt K."/>
            <person name="Howden P.J."/>
            <person name="Hunt A.R."/>
            <person name="Hunt S.E."/>
            <person name="Hunter G."/>
            <person name="Isherwood J."/>
            <person name="James R."/>
            <person name="Johnson C."/>
            <person name="Johnson D."/>
            <person name="Joy A."/>
            <person name="Kay M."/>
            <person name="Kershaw J.K."/>
            <person name="Kibukawa M."/>
            <person name="Kimberley A.M."/>
            <person name="King A."/>
            <person name="Knights A.J."/>
            <person name="Lad H."/>
            <person name="Laird G."/>
            <person name="Lawlor S."/>
            <person name="Leongamornlert D.A."/>
            <person name="Lloyd D.M."/>
            <person name="Loveland J."/>
            <person name="Lovell J."/>
            <person name="Lush M.J."/>
            <person name="Lyne R."/>
            <person name="Martin S."/>
            <person name="Mashreghi-Mohammadi M."/>
            <person name="Matthews L."/>
            <person name="Matthews N.S.W."/>
            <person name="McLaren S."/>
            <person name="Milne S."/>
            <person name="Mistry S."/>
            <person name="Moore M.J.F."/>
            <person name="Nickerson T."/>
            <person name="O'Dell C.N."/>
            <person name="Oliver K."/>
            <person name="Palmeiri A."/>
            <person name="Palmer S.A."/>
            <person name="Parker A."/>
            <person name="Patel D."/>
            <person name="Pearce A.V."/>
            <person name="Peck A.I."/>
            <person name="Pelan S."/>
            <person name="Phelps K."/>
            <person name="Phillimore B.J."/>
            <person name="Plumb R."/>
            <person name="Rajan J."/>
            <person name="Raymond C."/>
            <person name="Rouse G."/>
            <person name="Saenphimmachak C."/>
            <person name="Sehra H.K."/>
            <person name="Sheridan E."/>
            <person name="Shownkeen R."/>
            <person name="Sims S."/>
            <person name="Skuce C.D."/>
            <person name="Smith M."/>
            <person name="Steward C."/>
            <person name="Subramanian S."/>
            <person name="Sycamore N."/>
            <person name="Tracey A."/>
            <person name="Tromans A."/>
            <person name="Van Helmond Z."/>
            <person name="Wall M."/>
            <person name="Wallis J.M."/>
            <person name="White S."/>
            <person name="Whitehead S.L."/>
            <person name="Wilkinson J.E."/>
            <person name="Willey D.L."/>
            <person name="Williams H."/>
            <person name="Wilming L."/>
            <person name="Wray P.W."/>
            <person name="Wu Z."/>
            <person name="Coulson A."/>
            <person name="Vaudin M."/>
            <person name="Sulston J.E."/>
            <person name="Durbin R.M."/>
            <person name="Hubbard T."/>
            <person name="Wooster R."/>
            <person name="Dunham I."/>
            <person name="Carter N.P."/>
            <person name="McVean G."/>
            <person name="Ross M.T."/>
            <person name="Harrow J."/>
            <person name="Olson M.V."/>
            <person name="Beck S."/>
            <person name="Rogers J."/>
            <person name="Bentley D.R."/>
        </authorList>
    </citation>
    <scope>NUCLEOTIDE SEQUENCE [LARGE SCALE GENOMIC DNA]</scope>
</reference>
<reference key="2">
    <citation type="journal article" date="2004" name="Genome Res.">
        <title>The status, quality, and expansion of the NIH full-length cDNA project: the Mammalian Gene Collection (MGC).</title>
        <authorList>
            <consortium name="The MGC Project Team"/>
        </authorList>
    </citation>
    <scope>NUCLEOTIDE SEQUENCE [LARGE SCALE MRNA]</scope>
</reference>
<reference key="3">
    <citation type="submission" date="1999-04" db="EMBL/GenBank/DDBJ databases">
        <authorList>
            <person name="Rhodes S."/>
        </authorList>
    </citation>
    <scope>NUCLEOTIDE SEQUENCE [LARGE SCALE MRNA] OF 43-477</scope>
</reference>
<proteinExistence type="evidence at transcript level"/>
<feature type="chain" id="PRO_0000156985" description="PRAME family member 11">
    <location>
        <begin position="1"/>
        <end position="478"/>
    </location>
</feature>
<feature type="repeat" description="LRR 1; degenerate" evidence="1">
    <location>
        <begin position="99"/>
        <end position="126"/>
    </location>
</feature>
<feature type="repeat" description="LRR 2; degenerate" evidence="1">
    <location>
        <begin position="181"/>
        <end position="205"/>
    </location>
</feature>
<feature type="repeat" description="LRR 3; degenerate" evidence="1">
    <location>
        <begin position="206"/>
        <end position="232"/>
    </location>
</feature>
<feature type="repeat" description="LRR 4; degenerate" evidence="1">
    <location>
        <begin position="233"/>
        <end position="268"/>
    </location>
</feature>
<feature type="repeat" description="LRR 5" evidence="1">
    <location>
        <begin position="269"/>
        <end position="294"/>
    </location>
</feature>
<feature type="repeat" description="LRR 6" evidence="1">
    <location>
        <begin position="295"/>
        <end position="326"/>
    </location>
</feature>
<feature type="repeat" description="LRR 7" evidence="1">
    <location>
        <begin position="327"/>
        <end position="347"/>
    </location>
</feature>
<feature type="repeat" description="LRR 8" evidence="1">
    <location>
        <begin position="351"/>
        <end position="378"/>
    </location>
</feature>
<feature type="repeat" description="LRR 9" evidence="1">
    <location>
        <begin position="379"/>
        <end position="403"/>
    </location>
</feature>
<feature type="sequence conflict" description="In Ref. 3; CAB41252 and 2; AAI44427." evidence="2" ref="3 2">
    <original>K</original>
    <variation>T</variation>
    <location>
        <position position="135"/>
    </location>
</feature>
<feature type="sequence conflict" description="In Ref. 3; CAB41252." evidence="2" ref="3">
    <original>G</original>
    <variation>E</variation>
    <location>
        <position position="145"/>
    </location>
</feature>
<feature type="sequence conflict" description="In Ref. 2; AAI44427." evidence="2" ref="2">
    <original>L</original>
    <variation>M</variation>
    <location>
        <position position="233"/>
    </location>
</feature>
<feature type="sequence conflict" description="In Ref. 2; AAI44427." evidence="2" ref="2">
    <original>L</original>
    <variation>V</variation>
    <location>
        <position position="412"/>
    </location>
</feature>
<feature type="sequence conflict" description="In Ref. 2; AAI44427." evidence="2" ref="2">
    <original>Q</original>
    <variation>R</variation>
    <location>
        <position position="419"/>
    </location>
</feature>
<feature type="sequence conflict" description="In Ref. 2; AAI44427." evidence="2" ref="2">
    <original>KK</original>
    <variation>NR</variation>
    <location>
        <begin position="442"/>
        <end position="443"/>
    </location>
</feature>
<feature type="sequence conflict" description="In Ref. 2; AAI44427." evidence="2" ref="2">
    <original>H</original>
    <variation>D</variation>
    <location>
        <position position="446"/>
    </location>
</feature>
<organism>
    <name type="scientific">Homo sapiens</name>
    <name type="common">Human</name>
    <dbReference type="NCBI Taxonomy" id="9606"/>
    <lineage>
        <taxon>Eukaryota</taxon>
        <taxon>Metazoa</taxon>
        <taxon>Chordata</taxon>
        <taxon>Craniata</taxon>
        <taxon>Vertebrata</taxon>
        <taxon>Euteleostomi</taxon>
        <taxon>Mammalia</taxon>
        <taxon>Eutheria</taxon>
        <taxon>Euarchontoglires</taxon>
        <taxon>Primates</taxon>
        <taxon>Haplorrhini</taxon>
        <taxon>Catarrhini</taxon>
        <taxon>Hominidae</taxon>
        <taxon>Homo</taxon>
    </lineage>
</organism>
<sequence>MKMSIRIPPRLLELAGRSLLRDQALAVSTLEELPTELFPPLFMEAFSRRRCEALKLMVQAWPFRRLPLRPLIKMPCLEAFQAVLDGLDALLTQGVRPRRWKLQVLDLQDVCENFWMVWSEAMAHGCFLNAKRNKKPVQDCPRMRGRQPLTVFVELWLKNRTLDEYLTCLLLWVKQRRDLLHLCCKKLKILGMPFRNIRSILKMVNLDCIQEVEVNCKWILPILTQFTPYLGHLRNLQKLVLSHMDVSRYVSPEQKKEIVTQFTTQFLKLRCLQKLYMNSVSFLEGHLDQLLSCLKTSLKVLTITNCVLLESDLKHLSQCPSISQLKTLDLSGIRLTNYSLVPLQILLEKVAATLEYLDLDDCGIIDSQVNAILPALSRCFELNTFSFCGNPICMATLENLLSHTIILKNLCLELYPAPQESYGADGTLCWSRFAQIRAELMKKVRHLRHPKRILFCTDNCPDHGDRSFYDLEADQYCC</sequence>